<comment type="function">
    <text evidence="1">The surface protein gp120 (SU) attaches the virus to the host lymphoid cell by binding to the primary receptor CD4. This interaction induces a structural rearrangement creating a high affinity binding site for a chemokine coreceptor like CXCR4 and/or CCR5. This peculiar 2 stage receptor-interaction strategy allows gp120 to maintain the highly conserved coreceptor-binding site in a cryptic conformation, protected from neutralizing antibodies. Since CD4 also displays a binding site for the disulfide-isomerase P4HB/PDI, a P4HB/PDI-CD4-CXCR4-gp120 complex may form. In that complex, P4HB/PDI could reach and reduce gp120 disulfide bonds, causing major conformational changes in gp120. TXN, another PDI family member could also be involved in disulfide rearrangements in Env during fusion. These changes are transmitted to the transmembrane protein gp41 and are thought to activate its fusogenic potential by unmasking its fusion peptide (By similarity).</text>
</comment>
<comment type="function">
    <text evidence="1">The surface protein gp120 is a ligand for CD209/DC-SIGN and CLEC4M/DC-SIGNR, which are respectively found on dendritic cells (DCs), and on endothelial cells of liver sinusoids and lymph node sinuses. These interactions allow capture of viral particles at mucosal surfaces by these cells and subsequent transmission to permissive cells. DCs are professional antigen presenting cells, critical for host immunity by inducing specific immune responses against a broad variety of pathogens. They act as sentinels in various tissues where they take up antigen, process it, and present it to T-cells following migration to lymphoid organs. HIV subverts the migration properties of dendritic cells to gain access to CD4+ T-cells in lymph nodes. Virus transmission to permissive T-cells occurs either in trans (without DCs infection, through viral capture and transmission), or in cis (following DCs productive infection, through the usual CD4-gp120 interaction), thereby inducing a robust infection. In trans infection, bound virions remain infectious over days and it is proposed that they are not degraded, but protected in non-lysosomal acidic organelles within the DCs close to the cell membrane thus contributing to the viral infectious potential during DCs' migration from the periphery to the lymphoid tissues. On arrival at lymphoid tissues, intact virions recycle back to DCs' cell surface allowing virus transmission to CD4+ T-cells. Virion capture also seems to lead to MHC-II-restricted viral antigen presentation, and probably to the activation of HIV-specific CD4+ cells (By similarity).</text>
</comment>
<comment type="function">
    <text evidence="1">The transmembrane protein gp41 (TM) acts as a class I viral fusion protein. Under the current model, the protein has at least 3 conformational states: pre-fusion native state, pre-hairpin intermediate state, and post-fusion hairpin state. During fusion of viral and target intracellular membranes, the coiled coil regions (heptad repeats) assume a trimer-of-hairpins structure, positioning the fusion peptide in close proximity to the C-terminal region of the ectodomain. The formation of this structure appears to drive apposition and subsequent fusion of viral and target cell membranes. Complete fusion occurs in host cell endosomes and is dynamin-dependent, however some lipid transfer might occur at the plasma membrane. The virus undergoes clathrin-dependent internalization long before endosomal fusion, thus minimizing the surface exposure of conserved viral epitopes during fusion and reducing the efficacy of inhibitors targeting these epitopes. Membranes fusion leads to delivery of the nucleocapsid into the cytoplasm (By similarity).</text>
</comment>
<comment type="function">
    <text evidence="1">The envelope glycoprotein gp160 precursor down-modulates cell surface CD4 antigen by interacting with it in the endoplasmic reticulum and blocking its transport to the cell surface.</text>
</comment>
<comment type="function">
    <text evidence="1">The gp120-gp41 heterodimer seems to contribute to T-cell depletion during HIV-1 infection. The envelope glycoproteins expressed on the surface of infected cells induce apoptosis through an interaction with uninfected cells expressing the receptor (CD4) and the coreceptors CXCR4 or CCR5. This type of bystander killing may be obtained by at least three distinct mechanisms. First, the interaction between the 2 cells can induce cellular fusion followed by nuclear fusion within the syncytium. Syncytia are condemned to die from apoptosis. Second, the 2 interacting cells may not fuse entirely and simply exchange plasma membrane lipids, after a sort of hemifusion process, followed by rapid death. Third, it is possible that virus-infected cells, on the point of undergoing apoptosis, fuse with CD4-expressing cells, in which case apoptosis is rapidly transmitted from one cell to the other and thus occurs in a sort of contagious fashion (By similarity).</text>
</comment>
<comment type="function">
    <text evidence="1">The gp120-gp41 heterodimer allows rapid transcytosis of the virus through CD4 negative cells such as simple epithelial monolayers of the intestinal, rectal and endocervical epithelial barriers. Both gp120 and gp41 specifically recognize glycosphingolipids galactosyl-ceramide (GalCer) or 3' sulfo-galactosyl-ceramide (GalS) present in the lipid rafts structures of epithelial cells. Binding to these alternative receptors allows the rapid transcytosis of the virus through the epithelial cells. This transcytotic vesicle-mediated transport of virions from the apical side to the basolateral side of the epithelial cells does not involve infection of the cells themselves (By similarity).</text>
</comment>
<comment type="subunit">
    <molecule>Surface protein gp120</molecule>
    <text evidence="1">The mature envelope protein (Env) consists of a homotrimer of non-covalently associated gp120-gp41 heterodimers. The resulting complex protrudes from the virus surface as a spike. There seems to be as few as 10 spikes on the average virion. Interacts with human CD4, CCR5 and CXCR4, to form a P4HB/PDI-CD4-CXCR4-gp120 complex. Gp120 also interacts with the C-type lectins CD209/DC-SIGN and CLEC4M/DC-SIGNR (collectively referred to as DC-SIGN(R)). Gp120 and gp41 interact with GalCer (By similarity).</text>
</comment>
<comment type="subunit">
    <molecule>Transmembrane protein gp41</molecule>
    <text evidence="1">The mature envelope protein (Env) consists of a homotrimer of non-covalently associated gp120-gp41 heterodimers. The resulting complex protrudes from the virus surface as a spike. There seems to be as few as 10 spikes on the average virion.</text>
</comment>
<comment type="subcellular location">
    <molecule>Transmembrane protein gp41</molecule>
    <subcellularLocation>
        <location evidence="1">Virion membrane</location>
        <topology evidence="1">Single-pass type I membrane protein</topology>
    </subcellularLocation>
    <subcellularLocation>
        <location evidence="1">Host cell membrane</location>
        <topology evidence="1">Single-pass type I membrane protein</topology>
    </subcellularLocation>
    <subcellularLocation>
        <location evidence="3">Host endosome membrane</location>
        <topology evidence="3">Single-pass type I membrane protein</topology>
    </subcellularLocation>
    <text evidence="1">It is probably concentrated at the site of budding and incorporated into the virions possibly by contacts between the cytoplasmic tail of Env and the N-terminus of Gag.</text>
</comment>
<comment type="subcellular location">
    <molecule>Surface protein gp120</molecule>
    <subcellularLocation>
        <location evidence="1">Virion membrane</location>
        <topology evidence="1">Peripheral membrane protein</topology>
    </subcellularLocation>
    <subcellularLocation>
        <location evidence="1">Host cell membrane</location>
        <topology evidence="1">Peripheral membrane protein</topology>
    </subcellularLocation>
    <subcellularLocation>
        <location evidence="3">Host endosome membrane</location>
        <topology evidence="3">Peripheral membrane protein</topology>
    </subcellularLocation>
    <text evidence="1">The surface protein is not anchored to the viral envelope, but associates with the extravirion surface through its binding to TM. It is probably concentrated at the site of budding and incorporated into the virions possibly by contacts between the cytoplasmic tail of Env and the N-terminus of Gag (By similarity).</text>
</comment>
<comment type="domain">
    <text evidence="1">Some of the most genetically diverse regions of the viral genome are present in Env. They are called variable regions 1 through 5 (V1 through V5). Coreceptor usage of gp120 is determined mainly by the primary structure of the third variable region (V3) in the outer domain of gp120. Binding to CCR5 involves a region adjacent in addition to V3 (By similarity).</text>
</comment>
<comment type="domain">
    <text evidence="1">The 17 amino acids long immunosuppressive region is present in many retroviral envelope proteins. Synthetic peptides derived from this relatively conserved sequence inhibit immune function in vitro and in vivo (By similarity).</text>
</comment>
<comment type="PTM">
    <text evidence="1">Specific enzymatic cleavages in vivo yield mature proteins. Envelope glycoproteins are synthesized as an inactive precursor that is heavily N-glycosylated and processed likely by host cell furin in the Golgi to yield the mature SU and TM proteins. The cleavage site between SU and TM requires the minimal sequence [KR]-X-[KR]-R (By similarity).</text>
</comment>
<comment type="PTM">
    <text evidence="1">Palmitoylation of the transmembrane protein and of Env polyprotein (prior to its proteolytic cleavage) is essential for their association with host cell membrane lipid rafts. Palmitoylation is therefore required for envelope trafficking to classical lipid rafts, but not for viral replication (By similarity).</text>
</comment>
<comment type="miscellaneous">
    <text>Some HIV-2 isolates have been described that can infect cells independently of CD4, using CXCR4 as primary receptor. These isolates may have an exposed coreceptor binding site.</text>
</comment>
<name>ENV_HV2KR</name>
<gene>
    <name type="primary">env</name>
</gene>
<organism>
    <name type="scientific">Human immunodeficiency virus type 2 subtype A (isolate KR)</name>
    <name type="common">HIV-2</name>
    <dbReference type="NCBI Taxonomy" id="73484"/>
    <lineage>
        <taxon>Viruses</taxon>
        <taxon>Riboviria</taxon>
        <taxon>Pararnavirae</taxon>
        <taxon>Artverviricota</taxon>
        <taxon>Revtraviricetes</taxon>
        <taxon>Ortervirales</taxon>
        <taxon>Retroviridae</taxon>
        <taxon>Orthoretrovirinae</taxon>
        <taxon>Lentivirus</taxon>
        <taxon>Human immunodeficiency virus 2</taxon>
    </lineage>
</organism>
<sequence>MDSRNQLIVAILLTSACLIYCAQYVTVFYGIPAWKNASIPLFCATRNRDTWGTIQCLPDNDDYQEIPLNVTEAFDAWNNTVTEQAVEDVWNLFETSVKPCVKLTPLCVQMECNSTSTESSNSTSEGSTVPEILNETTSCITNNSCSDLGSEEVVDCRFNMTGLQLDKPQQYSETWYSKDVVCDTTNGTSRKCYMNHCNTSVITESCDKHYWDAMRFRYCAPPGLCLLRCNDTNYSGFEPKCPKVVAATCTRMMETQTSTWFGFNGTRAENRTYIYWHGRDNRTIISLNTHYNLTMHCKRPGNKSVLPITLRSGRVFHSRPIINERPKQAWCWFGGDWKKAMQEVKQTLVKHPRYRGTNDTQKINFTQPGKGSDAEVVYMWTNCRGEFLYCNMTRFLNWIENRAHPQRNYAPCHIRQIINTWHRVGQNIYLPPREGELVCNSTVTSIIANIDMFDNQTSITFSAEVAELYRLELGDYKLVEITPIGFAPTSEKRYSSAPQRNKRGVFVLGVLGFLATAGSAMGAASLTLSAHPGLYWAGIVQQQQQLLDVVKRQQEMLRLTVWGTKNLQTRVTAIEKYLRDQARLNSWGCAFRQVCYTTVLWENNSIVPDWNNMTWQEWEQQTRDLEANISRSLEQAQIQQEKNMYELQKLNSWDVFGNWFDLTSWIKYIQYGVYVIIGIIALRIVIYVVQLLSRLRKGYRPVFSSPPGYIQQIHIHKDWEQPDREETDEDAGNSIGDSSWPWPIAYIHFLIRQLIRLLTGLYSVCKDLLSRSFPTLQLIFQSLQRALTTIRDWLRLTIAYLQYGCEWIQEVLQVLARTTRETLASAWRDLWGAMGRIGRGILAVPRRIRQGAELALL</sequence>
<protein>
    <recommendedName>
        <fullName>Envelope glycoprotein gp160</fullName>
    </recommendedName>
    <alternativeName>
        <fullName>Env polyprotein</fullName>
    </alternativeName>
    <component>
        <recommendedName>
            <fullName>Surface protein gp120</fullName>
            <shortName>SU</shortName>
        </recommendedName>
        <alternativeName>
            <fullName>Glycoprotein 120</fullName>
            <shortName>gp120</shortName>
        </alternativeName>
    </component>
    <component>
        <recommendedName>
            <fullName>Transmembrane protein gp41</fullName>
            <shortName>TM</shortName>
        </recommendedName>
        <alternativeName>
            <fullName>Glycoprotein 41</fullName>
            <shortName>gp41</shortName>
        </alternativeName>
    </component>
</protein>
<organismHost>
    <name type="scientific">Homo sapiens</name>
    <name type="common">Human</name>
    <dbReference type="NCBI Taxonomy" id="9606"/>
</organismHost>
<feature type="signal peptide" evidence="2">
    <location>
        <begin position="1"/>
        <end position="22"/>
    </location>
</feature>
<feature type="chain" id="PRO_0000239500" description="Envelope glycoprotein gp160">
    <location>
        <begin position="23"/>
        <end position="857"/>
    </location>
</feature>
<feature type="chain" id="PRO_0000038443" description="Surface protein gp120" evidence="1">
    <location>
        <begin position="23"/>
        <end position="503"/>
    </location>
</feature>
<feature type="chain" id="PRO_0000038444" description="Transmembrane protein gp41" evidence="1">
    <location>
        <begin position="504"/>
        <end position="857"/>
    </location>
</feature>
<feature type="topological domain" description="Extracellular" evidence="2">
    <location>
        <begin position="23"/>
        <end position="671"/>
    </location>
</feature>
<feature type="transmembrane region" description="Helical" evidence="2">
    <location>
        <begin position="672"/>
        <end position="692"/>
    </location>
</feature>
<feature type="topological domain" description="Cytoplasmic" evidence="2">
    <location>
        <begin position="693"/>
        <end position="857"/>
    </location>
</feature>
<feature type="region of interest" description="V1">
    <location>
        <begin position="112"/>
        <end position="155"/>
    </location>
</feature>
<feature type="region of interest" description="V2">
    <location>
        <begin position="156"/>
        <end position="197"/>
    </location>
</feature>
<feature type="region of interest" description="V3">
    <location>
        <begin position="297"/>
        <end position="330"/>
    </location>
</feature>
<feature type="region of interest" description="V4">
    <location>
        <begin position="390"/>
        <end position="412"/>
    </location>
</feature>
<feature type="region of interest" description="V5">
    <location>
        <begin position="454"/>
        <end position="461"/>
    </location>
</feature>
<feature type="region of interest" description="Fusion peptide" evidence="2">
    <location>
        <begin position="504"/>
        <end position="524"/>
    </location>
</feature>
<feature type="region of interest" description="Immunosuppression" evidence="1">
    <location>
        <begin position="567"/>
        <end position="583"/>
    </location>
</feature>
<feature type="region of interest" description="MPER; binding to GalCer" evidence="1">
    <location>
        <begin position="649"/>
        <end position="670"/>
    </location>
</feature>
<feature type="coiled-coil region" evidence="2">
    <location>
        <begin position="616"/>
        <end position="644"/>
    </location>
</feature>
<feature type="short sequence motif" description="YXXV motif; contains endocytosis signal" evidence="1">
    <location>
        <begin position="699"/>
        <end position="702"/>
    </location>
</feature>
<feature type="short sequence motif" description="Di-leucine internalization motif" evidence="1">
    <location>
        <begin position="856"/>
        <end position="857"/>
    </location>
</feature>
<feature type="site" description="Cleavage; by host furin" evidence="1">
    <location>
        <begin position="503"/>
        <end position="504"/>
    </location>
</feature>
<feature type="lipid moiety-binding region" description="S-palmitoyl cysteine; by host" evidence="1">
    <location>
        <position position="765"/>
    </location>
</feature>
<feature type="glycosylation site" description="N-linked (GlcNAc...) asparagine; by host" evidence="2">
    <location>
        <position position="36"/>
    </location>
</feature>
<feature type="glycosylation site" description="N-linked (GlcNAc...) asparagine; by host" evidence="2">
    <location>
        <position position="69"/>
    </location>
</feature>
<feature type="glycosylation site" description="N-linked (GlcNAc...) asparagine; by host" evidence="2">
    <location>
        <position position="78"/>
    </location>
</feature>
<feature type="glycosylation site" description="N-linked (GlcNAc...) asparagine; by host" evidence="2">
    <location>
        <position position="113"/>
    </location>
</feature>
<feature type="glycosylation site" description="N-linked (GlcNAc...) asparagine; by host" evidence="2">
    <location>
        <position position="121"/>
    </location>
</feature>
<feature type="glycosylation site" description="N-linked (GlcNAc...) asparagine; by host" evidence="2">
    <location>
        <position position="134"/>
    </location>
</feature>
<feature type="glycosylation site" description="N-linked (GlcNAc...) asparagine; by host" evidence="2">
    <location>
        <position position="142"/>
    </location>
</feature>
<feature type="glycosylation site" description="N-linked (GlcNAc...) asparagine; by host" evidence="2">
    <location>
        <position position="159"/>
    </location>
</feature>
<feature type="glycosylation site" description="N-linked (GlcNAc...) asparagine; by host" evidence="2">
    <location>
        <position position="186"/>
    </location>
</feature>
<feature type="glycosylation site" description="N-linked (GlcNAc...) asparagine; by host" evidence="2">
    <location>
        <position position="198"/>
    </location>
</feature>
<feature type="glycosylation site" description="N-linked (GlcNAc...) asparagine; by host" evidence="2">
    <location>
        <position position="230"/>
    </location>
</feature>
<feature type="glycosylation site" description="N-linked (GlcNAc...) asparagine; by host" evidence="2">
    <location>
        <position position="233"/>
    </location>
</feature>
<feature type="glycosylation site" description="N-linked (GlcNAc...) asparagine; by host" evidence="2">
    <location>
        <position position="264"/>
    </location>
</feature>
<feature type="glycosylation site" description="N-linked (GlcNAc...) asparagine; by host" evidence="2">
    <location>
        <position position="270"/>
    </location>
</feature>
<feature type="glycosylation site" description="N-linked (GlcNAc...) asparagine; by host" evidence="2">
    <location>
        <position position="281"/>
    </location>
</feature>
<feature type="glycosylation site" description="N-linked (GlcNAc...) asparagine; by host" evidence="2">
    <location>
        <position position="292"/>
    </location>
</feature>
<feature type="glycosylation site" description="N-linked (GlcNAc...) asparagine; by host" evidence="2">
    <location>
        <position position="302"/>
    </location>
</feature>
<feature type="glycosylation site" description="N-linked (GlcNAc...) asparagine; by host" evidence="2">
    <location>
        <position position="358"/>
    </location>
</feature>
<feature type="glycosylation site" description="N-linked (GlcNAc...) asparagine; by host" evidence="2">
    <location>
        <position position="364"/>
    </location>
</feature>
<feature type="glycosylation site" description="N-linked (GlcNAc...) asparagine; by host" evidence="2">
    <location>
        <position position="391"/>
    </location>
</feature>
<feature type="glycosylation site" description="N-linked (GlcNAc...) asparagine; by host" evidence="2">
    <location>
        <position position="440"/>
    </location>
</feature>
<feature type="glycosylation site" description="N-linked (GlcNAc...) asparagine; by host" evidence="2">
    <location>
        <position position="455"/>
    </location>
</feature>
<feature type="glycosylation site" description="N-linked (GlcNAc...) asparagine; by host" evidence="2">
    <location>
        <position position="603"/>
    </location>
</feature>
<feature type="glycosylation site" description="N-linked (GlcNAc...) asparagine; by host" evidence="2">
    <location>
        <position position="612"/>
    </location>
</feature>
<feature type="glycosylation site" description="N-linked (GlcNAc...) asparagine; by host" evidence="2">
    <location>
        <position position="628"/>
    </location>
</feature>
<feature type="disulfide bond" evidence="1">
    <location>
        <begin position="43"/>
        <end position="56"/>
    </location>
</feature>
<feature type="disulfide bond" evidence="1">
    <location>
        <begin position="100"/>
        <end position="206"/>
    </location>
</feature>
<feature type="disulfide bond" evidence="1">
    <location>
        <begin position="107"/>
        <end position="197"/>
    </location>
</feature>
<feature type="disulfide bond" evidence="1">
    <location>
        <begin position="112"/>
        <end position="156"/>
    </location>
</feature>
<feature type="disulfide bond" evidence="1">
    <location>
        <begin position="219"/>
        <end position="249"/>
    </location>
</feature>
<feature type="disulfide bond" evidence="1">
    <location>
        <begin position="229"/>
        <end position="241"/>
    </location>
</feature>
<feature type="disulfide bond" evidence="1">
    <location>
        <begin position="297"/>
        <end position="331"/>
    </location>
</feature>
<feature type="disulfide bond" evidence="1">
    <location>
        <begin position="383"/>
        <end position="439"/>
    </location>
</feature>
<feature type="disulfide bond" evidence="1">
    <location>
        <begin position="390"/>
        <end position="412"/>
    </location>
</feature>
<proteinExistence type="inferred from homology"/>
<reference key="1">
    <citation type="submission" date="1995-04" db="EMBL/GenBank/DDBJ databases">
        <authorList>
            <person name="Kraus G.K."/>
            <person name="Talbott R."/>
            <person name="Leavitt M."/>
            <person name="Luznick L."/>
            <person name="Schmidt A."/>
            <person name="Badel P."/>
            <person name="Bartz C."/>
            <person name="Morton W."/>
            <person name="Wong-Staal F."/>
            <person name="Looney D.J."/>
        </authorList>
    </citation>
    <scope>NUCLEOTIDE SEQUENCE [GENOMIC DNA]</scope>
</reference>
<reference key="2">
    <citation type="journal article" date="2002" name="J. Gen. Virol.">
        <title>Human immunodeficiency virus type 2.</title>
        <authorList>
            <person name="Reeves J.D."/>
            <person name="Doms R.W."/>
        </authorList>
    </citation>
    <scope>REVIEW</scope>
</reference>
<evidence type="ECO:0000250" key="1"/>
<evidence type="ECO:0000255" key="2"/>
<evidence type="ECO:0000305" key="3"/>
<keyword id="KW-0014">AIDS</keyword>
<keyword id="KW-0053">Apoptosis</keyword>
<keyword id="KW-1165">Clathrin-mediated endocytosis of virus by host</keyword>
<keyword id="KW-0165">Cleavage on pair of basic residues</keyword>
<keyword id="KW-0175">Coiled coil</keyword>
<keyword id="KW-1015">Disulfide bond</keyword>
<keyword id="KW-1170">Fusion of virus membrane with host endosomal membrane</keyword>
<keyword id="KW-1168">Fusion of virus membrane with host membrane</keyword>
<keyword id="KW-0325">Glycoprotein</keyword>
<keyword id="KW-1032">Host cell membrane</keyword>
<keyword id="KW-1039">Host endosome</keyword>
<keyword id="KW-1043">Host membrane</keyword>
<keyword id="KW-0945">Host-virus interaction</keyword>
<keyword id="KW-1090">Inhibition of host innate immune response by virus</keyword>
<keyword id="KW-1084">Inhibition of host tetherin by virus</keyword>
<keyword id="KW-0449">Lipoprotein</keyword>
<keyword id="KW-0472">Membrane</keyword>
<keyword id="KW-0564">Palmitate</keyword>
<keyword id="KW-0732">Signal</keyword>
<keyword id="KW-0812">Transmembrane</keyword>
<keyword id="KW-1133">Transmembrane helix</keyword>
<keyword id="KW-1161">Viral attachment to host cell</keyword>
<keyword id="KW-0261">Viral envelope protein</keyword>
<keyword id="KW-0899">Viral immunoevasion</keyword>
<keyword id="KW-1162">Viral penetration into host cytoplasm</keyword>
<keyword id="KW-0946">Virion</keyword>
<keyword id="KW-1164">Virus endocytosis by host</keyword>
<keyword id="KW-1160">Virus entry into host cell</keyword>
<accession>Q74126</accession>
<dbReference type="EMBL" id="U22047">
    <property type="protein sequence ID" value="AAA64582.1"/>
    <property type="molecule type" value="Genomic_DNA"/>
</dbReference>
<dbReference type="SMR" id="Q74126"/>
<dbReference type="GlyCosmos" id="Q74126">
    <property type="glycosylation" value="25 sites, No reported glycans"/>
</dbReference>
<dbReference type="Proteomes" id="UP000007425">
    <property type="component" value="Segment"/>
</dbReference>
<dbReference type="GO" id="GO:0044175">
    <property type="term" value="C:host cell endosome membrane"/>
    <property type="evidence" value="ECO:0007669"/>
    <property type="project" value="UniProtKB-SubCell"/>
</dbReference>
<dbReference type="GO" id="GO:0020002">
    <property type="term" value="C:host cell plasma membrane"/>
    <property type="evidence" value="ECO:0007669"/>
    <property type="project" value="UniProtKB-SubCell"/>
</dbReference>
<dbReference type="GO" id="GO:0016020">
    <property type="term" value="C:membrane"/>
    <property type="evidence" value="ECO:0007669"/>
    <property type="project" value="UniProtKB-KW"/>
</dbReference>
<dbReference type="GO" id="GO:0019031">
    <property type="term" value="C:viral envelope"/>
    <property type="evidence" value="ECO:0007669"/>
    <property type="project" value="UniProtKB-KW"/>
</dbReference>
<dbReference type="GO" id="GO:0055036">
    <property type="term" value="C:virion membrane"/>
    <property type="evidence" value="ECO:0007669"/>
    <property type="project" value="UniProtKB-SubCell"/>
</dbReference>
<dbReference type="GO" id="GO:0005198">
    <property type="term" value="F:structural molecule activity"/>
    <property type="evidence" value="ECO:0007669"/>
    <property type="project" value="InterPro"/>
</dbReference>
<dbReference type="GO" id="GO:0075512">
    <property type="term" value="P:clathrin-dependent endocytosis of virus by host cell"/>
    <property type="evidence" value="ECO:0007669"/>
    <property type="project" value="UniProtKB-KW"/>
</dbReference>
<dbReference type="GO" id="GO:0039654">
    <property type="term" value="P:fusion of virus membrane with host endosome membrane"/>
    <property type="evidence" value="ECO:0007669"/>
    <property type="project" value="UniProtKB-KW"/>
</dbReference>
<dbReference type="GO" id="GO:0052170">
    <property type="term" value="P:symbiont-mediated suppression of host innate immune response"/>
    <property type="evidence" value="ECO:0007669"/>
    <property type="project" value="UniProtKB-KW"/>
</dbReference>
<dbReference type="GO" id="GO:0039587">
    <property type="term" value="P:symbiont-mediated-mediated suppression of host tetherin activity"/>
    <property type="evidence" value="ECO:0007669"/>
    <property type="project" value="UniProtKB-KW"/>
</dbReference>
<dbReference type="GO" id="GO:0019062">
    <property type="term" value="P:virion attachment to host cell"/>
    <property type="evidence" value="ECO:0007669"/>
    <property type="project" value="UniProtKB-KW"/>
</dbReference>
<dbReference type="CDD" id="cd09909">
    <property type="entry name" value="HIV-1-like_HR1-HR2"/>
    <property type="match status" value="1"/>
</dbReference>
<dbReference type="Gene3D" id="1.10.287.210">
    <property type="match status" value="1"/>
</dbReference>
<dbReference type="Gene3D" id="2.170.40.20">
    <property type="entry name" value="Human immunodeficiency virus 1, Gp160, envelope glycoprotein"/>
    <property type="match status" value="2"/>
</dbReference>
<dbReference type="InterPro" id="IPR036377">
    <property type="entry name" value="Gp120_core_sf"/>
</dbReference>
<dbReference type="InterPro" id="IPR000328">
    <property type="entry name" value="GP41-like"/>
</dbReference>
<dbReference type="InterPro" id="IPR000777">
    <property type="entry name" value="HIV1_Gp120"/>
</dbReference>
<dbReference type="Pfam" id="PF00516">
    <property type="entry name" value="GP120"/>
    <property type="match status" value="1"/>
</dbReference>
<dbReference type="Pfam" id="PF00517">
    <property type="entry name" value="GP41"/>
    <property type="match status" value="1"/>
</dbReference>
<dbReference type="SUPFAM" id="SSF56502">
    <property type="entry name" value="gp120 core"/>
    <property type="match status" value="1"/>
</dbReference>
<dbReference type="SUPFAM" id="SSF58069">
    <property type="entry name" value="Virus ectodomain"/>
    <property type="match status" value="1"/>
</dbReference>